<accession>P55063</accession>
<accession>Q32P36</accession>
<accession>Q6MG67</accession>
<feature type="chain" id="PRO_0000078257" description="Heat shock 70 kDa protein 1-like">
    <location>
        <begin position="1"/>
        <end position="641"/>
    </location>
</feature>
<feature type="region of interest" description="Nucleotide-binding domain (NBD)" evidence="2">
    <location>
        <begin position="3"/>
        <end position="388"/>
    </location>
</feature>
<feature type="region of interest" description="Substrate-binding domain (SBD)" evidence="2">
    <location>
        <begin position="396"/>
        <end position="511"/>
    </location>
</feature>
<feature type="binding site" evidence="1">
    <location>
        <begin position="14"/>
        <end position="17"/>
    </location>
    <ligand>
        <name>ATP</name>
        <dbReference type="ChEBI" id="CHEBI:30616"/>
    </ligand>
</feature>
<feature type="binding site" evidence="1">
    <location>
        <position position="73"/>
    </location>
    <ligand>
        <name>ATP</name>
        <dbReference type="ChEBI" id="CHEBI:30616"/>
    </ligand>
</feature>
<feature type="binding site" evidence="1">
    <location>
        <begin position="204"/>
        <end position="206"/>
    </location>
    <ligand>
        <name>ATP</name>
        <dbReference type="ChEBI" id="CHEBI:30616"/>
    </ligand>
</feature>
<feature type="binding site" evidence="1">
    <location>
        <begin position="270"/>
        <end position="277"/>
    </location>
    <ligand>
        <name>ATP</name>
        <dbReference type="ChEBI" id="CHEBI:30616"/>
    </ligand>
</feature>
<feature type="binding site" evidence="1">
    <location>
        <begin position="341"/>
        <end position="344"/>
    </location>
    <ligand>
        <name>ATP</name>
        <dbReference type="ChEBI" id="CHEBI:30616"/>
    </ligand>
</feature>
<feature type="sequence conflict" description="In Ref. 1; CAA54424." evidence="4" ref="1">
    <original>R</original>
    <variation>A</variation>
    <location>
        <position position="266"/>
    </location>
</feature>
<feature type="sequence conflict" description="In Ref. 1; CAA54424." evidence="4" ref="1">
    <original>A</original>
    <variation>R</variation>
    <location>
        <position position="632"/>
    </location>
</feature>
<sequence>MAANKGMAIGIDLGTTYSCVGVFQHGKVEIIANDQGNRTTPSYVAFTDTERLIGDAAKNQVAMNPQNTVFDAKRLIGRKFNDPVVQSDMKLWPFQVINEAGKPKVLVSYKGEKKAFYPEEISSMVLTKMKETAEAFLGHSVTNAVITVPAYFNDSQRQATKDAGVIAGLNVLRIINEPTAAAIAYGLDKGSHGERHVLIFDLGGGTFDVSILTIDDGIFEVKATAGDTHLGGEDFDNRLVSHFVEEFKRKHKKDISQNKRAVRRLRTACERAKRTLSSSTQANLEIDSLYEGIDFYTSITRARFEELCADLFRGTLEPVEKSLRDAKMDKAKIHDIVLVGGSTRIPKVQKLLQDYFNGRDLNKSINPDEAVAYGAAVQAAILMGDKSEKVQDLLLLDVAPLSLGLETAGGVMTVLIKRNSTIPTKQTQIFTTYSDNQPGVLIQVYEGERAMTRDNNLLGRFDLTGIPPAPRGVPQIEVTFDIDANGILNVTAMDKSTGKANKITITNDKGRLSKEEIERMVQEAERYKAEDEGQREKIAAKNALESYAFNMKSAVGDEGLKDKISESDKKKILDKCSEVLSWLEANQLAEKEEFDHKRKELENMCNPIITKLYQSGCTGPTCAPGYTPGRAATGPTIEEVD</sequence>
<organism>
    <name type="scientific">Rattus norvegicus</name>
    <name type="common">Rat</name>
    <dbReference type="NCBI Taxonomy" id="10116"/>
    <lineage>
        <taxon>Eukaryota</taxon>
        <taxon>Metazoa</taxon>
        <taxon>Chordata</taxon>
        <taxon>Craniata</taxon>
        <taxon>Vertebrata</taxon>
        <taxon>Euteleostomi</taxon>
        <taxon>Mammalia</taxon>
        <taxon>Eutheria</taxon>
        <taxon>Euarchontoglires</taxon>
        <taxon>Glires</taxon>
        <taxon>Rodentia</taxon>
        <taxon>Myomorpha</taxon>
        <taxon>Muroidea</taxon>
        <taxon>Muridae</taxon>
        <taxon>Murinae</taxon>
        <taxon>Rattus</taxon>
    </lineage>
</organism>
<reference key="1">
    <citation type="journal article" date="1994" name="Immunogenetics">
        <title>Comparative analysis of the three major histocompatibility complex-linked heat shock protein 70 (Hsp70) genes of the rat.</title>
        <authorList>
            <person name="Walter L."/>
            <person name="Rauh F."/>
            <person name="Guenther E."/>
        </authorList>
    </citation>
    <scope>NUCLEOTIDE SEQUENCE [GENOMIC DNA]</scope>
    <source>
        <strain>LEW.1W/GUN</strain>
    </source>
</reference>
<reference key="2">
    <citation type="journal article" date="2004" name="Genome Res.">
        <title>The genomic sequence and comparative analysis of the rat major histocompatibility complex.</title>
        <authorList>
            <person name="Hurt P."/>
            <person name="Walter L."/>
            <person name="Sudbrak R."/>
            <person name="Klages S."/>
            <person name="Mueller I."/>
            <person name="Shiina T."/>
            <person name="Inoko H."/>
            <person name="Lehrach H."/>
            <person name="Guenther E."/>
            <person name="Reinhardt R."/>
            <person name="Himmelbauer H."/>
        </authorList>
    </citation>
    <scope>NUCLEOTIDE SEQUENCE [LARGE SCALE GENOMIC DNA]</scope>
    <source>
        <strain>Brown Norway</strain>
    </source>
</reference>
<reference key="3">
    <citation type="journal article" date="2004" name="Genome Res.">
        <title>The status, quality, and expansion of the NIH full-length cDNA project: the Mammalian Gene Collection (MGC).</title>
        <authorList>
            <consortium name="The MGC Project Team"/>
        </authorList>
    </citation>
    <scope>NUCLEOTIDE SEQUENCE [LARGE SCALE MRNA]</scope>
    <source>
        <tissue>Testis</tissue>
    </source>
</reference>
<name>HS71L_RAT</name>
<protein>
    <recommendedName>
        <fullName>Heat shock 70 kDa protein 1-like</fullName>
        <shortName>Heat shock 70 kDa protein 1L</shortName>
    </recommendedName>
    <alternativeName>
        <fullName>Heat shock 70 kDa protein 3</fullName>
        <shortName>HSP70.3</shortName>
    </alternativeName>
</protein>
<keyword id="KW-0067">ATP-binding</keyword>
<keyword id="KW-0143">Chaperone</keyword>
<keyword id="KW-0547">Nucleotide-binding</keyword>
<keyword id="KW-1185">Reference proteome</keyword>
<keyword id="KW-0346">Stress response</keyword>
<evidence type="ECO:0000250" key="1"/>
<evidence type="ECO:0000250" key="2">
    <source>
        <dbReference type="UniProtKB" id="P11142"/>
    </source>
</evidence>
<evidence type="ECO:0000250" key="3">
    <source>
        <dbReference type="UniProtKB" id="P34931"/>
    </source>
</evidence>
<evidence type="ECO:0000305" key="4"/>
<comment type="function">
    <text evidence="3">Molecular chaperone implicated in a wide variety of cellular processes, including protection of the proteome from stress, folding and transport of newly synthesized polypeptides, activation of proteolysis of misfolded proteins and the formation and dissociation of protein complexes. Plays a pivotal role in the protein quality control system, ensuring the correct folding of proteins, the re-folding of misfolded proteins and controlling the targeting of proteins for subsequent degradation. This is achieved through cycles of ATP binding, ATP hydrolysis and ADP release, mediated by co-chaperones. The affinity for polypeptides is regulated by its nucleotide bound state. In the ATP-bound form, it has a low affinity for substrate proteins. However, upon hydrolysis of the ATP to ADP, it undergoes a conformational change that increases its affinity for substrate proteins. It goes through repeated cycles of ATP hydrolysis and nucleotide exchange, which permits cycles of substrate binding and release. Positive regulator of PRKN translocation to damaged mitochondria.</text>
</comment>
<comment type="subunit">
    <text evidence="3">Interacts with PRKN.</text>
</comment>
<comment type="induction">
    <text>By heat shock.</text>
</comment>
<comment type="domain">
    <text evidence="3">The N-terminal nucleotide binding domain (NBD) (also known as the ATPase domain) is responsible for binding and hydrolyzing ATP. The C-terminal substrate-binding domain (SBD) (also known as peptide-binding domain) binds to the client/substrate proteins. The two domains are allosterically coupled so that, when ATP is bound to the NBD, the SBD binds relatively weakly to clients. When ADP is bound in the NBD, a conformational change enhances the affinity of the SBD for client proteins.</text>
</comment>
<comment type="similarity">
    <text evidence="4">Belongs to the heat shock protein 70 family.</text>
</comment>
<gene>
    <name type="primary">Hspa1l</name>
    <name type="synonym">Hsp70-3</name>
</gene>
<proteinExistence type="evidence at transcript level"/>
<dbReference type="EMBL" id="X77209">
    <property type="protein sequence ID" value="CAA54424.1"/>
    <property type="molecule type" value="Genomic_DNA"/>
</dbReference>
<dbReference type="EMBL" id="BX883045">
    <property type="protein sequence ID" value="CAE83979.1"/>
    <property type="molecule type" value="Genomic_DNA"/>
</dbReference>
<dbReference type="EMBL" id="BC108294">
    <property type="protein sequence ID" value="AAI08295.1"/>
    <property type="molecule type" value="mRNA"/>
</dbReference>
<dbReference type="EMBL" id="BC108297">
    <property type="protein sequence ID" value="AAI08298.1"/>
    <property type="molecule type" value="mRNA"/>
</dbReference>
<dbReference type="PIR" id="S41415">
    <property type="entry name" value="S41415"/>
</dbReference>
<dbReference type="RefSeq" id="NP_997711.1">
    <property type="nucleotide sequence ID" value="NM_212546.4"/>
</dbReference>
<dbReference type="RefSeq" id="XP_017457033.1">
    <property type="nucleotide sequence ID" value="XM_017601544.1"/>
</dbReference>
<dbReference type="SMR" id="P55063"/>
<dbReference type="BioGRID" id="247061">
    <property type="interactions" value="4"/>
</dbReference>
<dbReference type="FunCoup" id="P55063">
    <property type="interactions" value="1015"/>
</dbReference>
<dbReference type="IntAct" id="P55063">
    <property type="interactions" value="3"/>
</dbReference>
<dbReference type="MINT" id="P55063"/>
<dbReference type="STRING" id="10116.ENSRNOP00000063974"/>
<dbReference type="GlyGen" id="P55063">
    <property type="glycosylation" value="1 site"/>
</dbReference>
<dbReference type="iPTMnet" id="P55063"/>
<dbReference type="PhosphoSitePlus" id="P55063"/>
<dbReference type="jPOST" id="P55063"/>
<dbReference type="PaxDb" id="10116-ENSRNOP00000063974"/>
<dbReference type="Ensembl" id="ENSRNOT00000074223.3">
    <property type="protein sequence ID" value="ENSRNOP00000063974.1"/>
    <property type="gene ID" value="ENSRNOG00000047966.3"/>
</dbReference>
<dbReference type="GeneID" id="24963"/>
<dbReference type="KEGG" id="rno:24963"/>
<dbReference type="AGR" id="RGD:1595925"/>
<dbReference type="CTD" id="3305"/>
<dbReference type="RGD" id="1595925">
    <property type="gene designation" value="Hspa1l"/>
</dbReference>
<dbReference type="eggNOG" id="KOG0101">
    <property type="taxonomic scope" value="Eukaryota"/>
</dbReference>
<dbReference type="GeneTree" id="ENSGT00940000162096"/>
<dbReference type="HOGENOM" id="CLU_005965_3_0_1"/>
<dbReference type="InParanoid" id="P55063"/>
<dbReference type="OMA" id="VCKPIVT"/>
<dbReference type="OrthoDB" id="2401965at2759"/>
<dbReference type="PhylomeDB" id="P55063"/>
<dbReference type="Reactome" id="R-RNO-3371453">
    <property type="pathway name" value="Regulation of HSF1-mediated heat shock response"/>
</dbReference>
<dbReference type="Reactome" id="R-RNO-3371497">
    <property type="pathway name" value="HSP90 chaperone cycle for steroid hormone receptors (SHR) in the presence of ligand"/>
</dbReference>
<dbReference type="Reactome" id="R-RNO-3371568">
    <property type="pathway name" value="Attenuation phase"/>
</dbReference>
<dbReference type="Reactome" id="R-RNO-3371571">
    <property type="pathway name" value="HSF1-dependent transactivation"/>
</dbReference>
<dbReference type="Reactome" id="R-RNO-9833482">
    <property type="pathway name" value="PKR-mediated signaling"/>
</dbReference>
<dbReference type="PRO" id="PR:P55063"/>
<dbReference type="Proteomes" id="UP000002494">
    <property type="component" value="Chromosome 20"/>
</dbReference>
<dbReference type="Bgee" id="ENSRNOG00000047966">
    <property type="expression patterns" value="Expressed in testis and 13 other cell types or tissues"/>
</dbReference>
<dbReference type="GO" id="GO:0044297">
    <property type="term" value="C:cell body"/>
    <property type="evidence" value="ECO:0000266"/>
    <property type="project" value="RGD"/>
</dbReference>
<dbReference type="GO" id="GO:0008180">
    <property type="term" value="C:COP9 signalosome"/>
    <property type="evidence" value="ECO:0000266"/>
    <property type="project" value="RGD"/>
</dbReference>
<dbReference type="GO" id="GO:0005737">
    <property type="term" value="C:cytoplasm"/>
    <property type="evidence" value="ECO:0000318"/>
    <property type="project" value="GO_Central"/>
</dbReference>
<dbReference type="GO" id="GO:0005829">
    <property type="term" value="C:cytosol"/>
    <property type="evidence" value="ECO:0000266"/>
    <property type="project" value="RGD"/>
</dbReference>
<dbReference type="GO" id="GO:0005759">
    <property type="term" value="C:mitochondrial matrix"/>
    <property type="evidence" value="ECO:0000314"/>
    <property type="project" value="MGI"/>
</dbReference>
<dbReference type="GO" id="GO:0005739">
    <property type="term" value="C:mitochondrion"/>
    <property type="evidence" value="ECO:0000314"/>
    <property type="project" value="MGI"/>
</dbReference>
<dbReference type="GO" id="GO:0005634">
    <property type="term" value="C:nucleus"/>
    <property type="evidence" value="ECO:0000318"/>
    <property type="project" value="GO_Central"/>
</dbReference>
<dbReference type="GO" id="GO:0005886">
    <property type="term" value="C:plasma membrane"/>
    <property type="evidence" value="ECO:0000318"/>
    <property type="project" value="GO_Central"/>
</dbReference>
<dbReference type="GO" id="GO:0002199">
    <property type="term" value="C:zona pellucida receptor complex"/>
    <property type="evidence" value="ECO:0000266"/>
    <property type="project" value="RGD"/>
</dbReference>
<dbReference type="GO" id="GO:0005524">
    <property type="term" value="F:ATP binding"/>
    <property type="evidence" value="ECO:0007669"/>
    <property type="project" value="UniProtKB-KW"/>
</dbReference>
<dbReference type="GO" id="GO:0016887">
    <property type="term" value="F:ATP hydrolysis activity"/>
    <property type="evidence" value="ECO:0000318"/>
    <property type="project" value="GO_Central"/>
</dbReference>
<dbReference type="GO" id="GO:0140662">
    <property type="term" value="F:ATP-dependent protein folding chaperone"/>
    <property type="evidence" value="ECO:0007669"/>
    <property type="project" value="InterPro"/>
</dbReference>
<dbReference type="GO" id="GO:0031072">
    <property type="term" value="F:heat shock protein binding"/>
    <property type="evidence" value="ECO:0000266"/>
    <property type="project" value="RGD"/>
</dbReference>
<dbReference type="GO" id="GO:0044183">
    <property type="term" value="F:protein folding chaperone"/>
    <property type="evidence" value="ECO:0000318"/>
    <property type="project" value="GO_Central"/>
</dbReference>
<dbReference type="GO" id="GO:0031625">
    <property type="term" value="F:ubiquitin protein ligase binding"/>
    <property type="evidence" value="ECO:0000266"/>
    <property type="project" value="RGD"/>
</dbReference>
<dbReference type="GO" id="GO:0051082">
    <property type="term" value="F:unfolded protein binding"/>
    <property type="evidence" value="ECO:0000266"/>
    <property type="project" value="RGD"/>
</dbReference>
<dbReference type="GO" id="GO:0007339">
    <property type="term" value="P:binding of sperm to zona pellucida"/>
    <property type="evidence" value="ECO:0000266"/>
    <property type="project" value="RGD"/>
</dbReference>
<dbReference type="GO" id="GO:0051085">
    <property type="term" value="P:chaperone cofactor-dependent protein refolding"/>
    <property type="evidence" value="ECO:0000318"/>
    <property type="project" value="GO_Central"/>
</dbReference>
<dbReference type="GO" id="GO:1903955">
    <property type="term" value="P:positive regulation of protein targeting to mitochondrion"/>
    <property type="evidence" value="ECO:0000266"/>
    <property type="project" value="RGD"/>
</dbReference>
<dbReference type="GO" id="GO:0042026">
    <property type="term" value="P:protein refolding"/>
    <property type="evidence" value="ECO:0000266"/>
    <property type="project" value="RGD"/>
</dbReference>
<dbReference type="CDD" id="cd10233">
    <property type="entry name" value="ASKHA_NBD_HSP70_HSPA1"/>
    <property type="match status" value="1"/>
</dbReference>
<dbReference type="FunFam" id="2.60.34.10:FF:000002">
    <property type="entry name" value="Heat shock 70 kDa"/>
    <property type="match status" value="1"/>
</dbReference>
<dbReference type="FunFam" id="3.30.420.40:FF:000172">
    <property type="entry name" value="Heat shock 70 kDa protein"/>
    <property type="match status" value="1"/>
</dbReference>
<dbReference type="FunFam" id="1.20.1270.10:FF:000019">
    <property type="entry name" value="Heat shock 70 kDa protein 1-like"/>
    <property type="match status" value="1"/>
</dbReference>
<dbReference type="FunFam" id="3.30.30.30:FF:000001">
    <property type="entry name" value="heat shock 70 kDa protein-like"/>
    <property type="match status" value="1"/>
</dbReference>
<dbReference type="FunFam" id="3.30.420.40:FF:000028">
    <property type="entry name" value="heat shock 70 kDa protein-like"/>
    <property type="match status" value="1"/>
</dbReference>
<dbReference type="FunFam" id="3.30.420.40:FF:000135">
    <property type="entry name" value="Heat shock cognate 71 kDa protein"/>
    <property type="match status" value="1"/>
</dbReference>
<dbReference type="FunFam" id="3.90.640.10:FF:000134">
    <property type="entry name" value="Heat shock cognate 71 kDa protein"/>
    <property type="match status" value="1"/>
</dbReference>
<dbReference type="FunFam" id="3.30.420.40:FF:000026">
    <property type="entry name" value="Heat shock protein 70"/>
    <property type="match status" value="1"/>
</dbReference>
<dbReference type="Gene3D" id="1.20.1270.10">
    <property type="match status" value="1"/>
</dbReference>
<dbReference type="Gene3D" id="3.30.30.30">
    <property type="match status" value="1"/>
</dbReference>
<dbReference type="Gene3D" id="3.30.420.40">
    <property type="match status" value="2"/>
</dbReference>
<dbReference type="Gene3D" id="3.90.640.10">
    <property type="entry name" value="Actin, Chain A, domain 4"/>
    <property type="match status" value="1"/>
</dbReference>
<dbReference type="Gene3D" id="2.60.34.10">
    <property type="entry name" value="Substrate Binding Domain Of DNAk, Chain A, domain 1"/>
    <property type="match status" value="1"/>
</dbReference>
<dbReference type="InterPro" id="IPR043129">
    <property type="entry name" value="ATPase_NBD"/>
</dbReference>
<dbReference type="InterPro" id="IPR018181">
    <property type="entry name" value="Heat_shock_70_CS"/>
</dbReference>
<dbReference type="InterPro" id="IPR029048">
    <property type="entry name" value="HSP70_C_sf"/>
</dbReference>
<dbReference type="InterPro" id="IPR029047">
    <property type="entry name" value="HSP70_peptide-bd_sf"/>
</dbReference>
<dbReference type="InterPro" id="IPR013126">
    <property type="entry name" value="Hsp_70_fam"/>
</dbReference>
<dbReference type="NCBIfam" id="NF001413">
    <property type="entry name" value="PRK00290.1"/>
    <property type="match status" value="1"/>
</dbReference>
<dbReference type="PANTHER" id="PTHR19375">
    <property type="entry name" value="HEAT SHOCK PROTEIN 70KDA"/>
    <property type="match status" value="1"/>
</dbReference>
<dbReference type="Pfam" id="PF00012">
    <property type="entry name" value="HSP70"/>
    <property type="match status" value="1"/>
</dbReference>
<dbReference type="PRINTS" id="PR00301">
    <property type="entry name" value="HEATSHOCK70"/>
</dbReference>
<dbReference type="SUPFAM" id="SSF53067">
    <property type="entry name" value="Actin-like ATPase domain"/>
    <property type="match status" value="2"/>
</dbReference>
<dbReference type="SUPFAM" id="SSF100934">
    <property type="entry name" value="Heat shock protein 70kD (HSP70), C-terminal subdomain"/>
    <property type="match status" value="1"/>
</dbReference>
<dbReference type="SUPFAM" id="SSF100920">
    <property type="entry name" value="Heat shock protein 70kD (HSP70), peptide-binding domain"/>
    <property type="match status" value="1"/>
</dbReference>
<dbReference type="PROSITE" id="PS00297">
    <property type="entry name" value="HSP70_1"/>
    <property type="match status" value="1"/>
</dbReference>
<dbReference type="PROSITE" id="PS00329">
    <property type="entry name" value="HSP70_2"/>
    <property type="match status" value="1"/>
</dbReference>
<dbReference type="PROSITE" id="PS01036">
    <property type="entry name" value="HSP70_3"/>
    <property type="match status" value="1"/>
</dbReference>